<organism>
    <name type="scientific">Saccharolobus islandicus (strain M.16.27)</name>
    <name type="common">Sulfolobus islandicus</name>
    <dbReference type="NCBI Taxonomy" id="427318"/>
    <lineage>
        <taxon>Archaea</taxon>
        <taxon>Thermoproteota</taxon>
        <taxon>Thermoprotei</taxon>
        <taxon>Sulfolobales</taxon>
        <taxon>Sulfolobaceae</taxon>
        <taxon>Saccharolobus</taxon>
    </lineage>
</organism>
<accession>C3MZ62</accession>
<sequence length="154" mass="17091">MQGKSIRLGIVVAEFNYDITQLMLQKALSHAKFLNAEVKVVIKVPGTFDMPLAIKKLLEKDFIDAVVTLGAVIKGETKHDEIVASQTARKIVDLSTEFNKPVTLGIIGHGATHEQAVERIEEYATRAVEAAIKLVQRTRKIDELKEVKETVIID</sequence>
<gene>
    <name evidence="1" type="primary">ribH</name>
    <name type="ordered locus">M1627_1819</name>
</gene>
<evidence type="ECO:0000255" key="1">
    <source>
        <dbReference type="HAMAP-Rule" id="MF_00178"/>
    </source>
</evidence>
<protein>
    <recommendedName>
        <fullName evidence="1">6,7-dimethyl-8-ribityllumazine synthase</fullName>
        <shortName evidence="1">DMRL synthase</shortName>
        <shortName evidence="1">LS</shortName>
        <shortName evidence="1">Lumazine synthase</shortName>
        <ecNumber evidence="1">2.5.1.78</ecNumber>
    </recommendedName>
</protein>
<feature type="chain" id="PRO_1000203800" description="6,7-dimethyl-8-ribityllumazine synthase">
    <location>
        <begin position="1"/>
        <end position="154"/>
    </location>
</feature>
<feature type="active site" description="Proton donor" evidence="1">
    <location>
        <position position="79"/>
    </location>
</feature>
<feature type="binding site" evidence="1">
    <location>
        <position position="15"/>
    </location>
    <ligand>
        <name>5-amino-6-(D-ribitylamino)uracil</name>
        <dbReference type="ChEBI" id="CHEBI:15934"/>
    </ligand>
</feature>
<feature type="binding site" evidence="1">
    <location>
        <begin position="47"/>
        <end position="49"/>
    </location>
    <ligand>
        <name>5-amino-6-(D-ribitylamino)uracil</name>
        <dbReference type="ChEBI" id="CHEBI:15934"/>
    </ligand>
</feature>
<feature type="binding site" evidence="1">
    <location>
        <begin position="71"/>
        <end position="73"/>
    </location>
    <ligand>
        <name>5-amino-6-(D-ribitylamino)uracil</name>
        <dbReference type="ChEBI" id="CHEBI:15934"/>
    </ligand>
</feature>
<feature type="binding site" evidence="1">
    <location>
        <begin position="76"/>
        <end position="77"/>
    </location>
    <ligand>
        <name>(2S)-2-hydroxy-3-oxobutyl phosphate</name>
        <dbReference type="ChEBI" id="CHEBI:58830"/>
    </ligand>
</feature>
<feature type="binding site" evidence="1">
    <location>
        <position position="104"/>
    </location>
    <ligand>
        <name>5-amino-6-(D-ribitylamino)uracil</name>
        <dbReference type="ChEBI" id="CHEBI:15934"/>
    </ligand>
</feature>
<feature type="binding site" evidence="1">
    <location>
        <position position="119"/>
    </location>
    <ligand>
        <name>(2S)-2-hydroxy-3-oxobutyl phosphate</name>
        <dbReference type="ChEBI" id="CHEBI:58830"/>
    </ligand>
</feature>
<proteinExistence type="inferred from homology"/>
<comment type="function">
    <text evidence="1">Catalyzes the formation of 6,7-dimethyl-8-ribityllumazine by condensation of 5-amino-6-(D-ribitylamino)uracil with 3,4-dihydroxy-2-butanone 4-phosphate. This is the penultimate step in the biosynthesis of riboflavin.</text>
</comment>
<comment type="catalytic activity">
    <reaction evidence="1">
        <text>(2S)-2-hydroxy-3-oxobutyl phosphate + 5-amino-6-(D-ribitylamino)uracil = 6,7-dimethyl-8-(1-D-ribityl)lumazine + phosphate + 2 H2O + H(+)</text>
        <dbReference type="Rhea" id="RHEA:26152"/>
        <dbReference type="ChEBI" id="CHEBI:15377"/>
        <dbReference type="ChEBI" id="CHEBI:15378"/>
        <dbReference type="ChEBI" id="CHEBI:15934"/>
        <dbReference type="ChEBI" id="CHEBI:43474"/>
        <dbReference type="ChEBI" id="CHEBI:58201"/>
        <dbReference type="ChEBI" id="CHEBI:58830"/>
        <dbReference type="EC" id="2.5.1.78"/>
    </reaction>
</comment>
<comment type="pathway">
    <text evidence="1">Cofactor biosynthesis; riboflavin biosynthesis; riboflavin from 2-hydroxy-3-oxobutyl phosphate and 5-amino-6-(D-ribitylamino)uracil: step 1/2.</text>
</comment>
<comment type="similarity">
    <text evidence="1">Belongs to the DMRL synthase family.</text>
</comment>
<reference key="1">
    <citation type="journal article" date="2009" name="Proc. Natl. Acad. Sci. U.S.A.">
        <title>Biogeography of the Sulfolobus islandicus pan-genome.</title>
        <authorList>
            <person name="Reno M.L."/>
            <person name="Held N.L."/>
            <person name="Fields C.J."/>
            <person name="Burke P.V."/>
            <person name="Whitaker R.J."/>
        </authorList>
    </citation>
    <scope>NUCLEOTIDE SEQUENCE [LARGE SCALE GENOMIC DNA]</scope>
    <source>
        <strain>M.16.27</strain>
    </source>
</reference>
<keyword id="KW-0686">Riboflavin biosynthesis</keyword>
<keyword id="KW-0808">Transferase</keyword>
<dbReference type="EC" id="2.5.1.78" evidence="1"/>
<dbReference type="EMBL" id="CP001401">
    <property type="protein sequence ID" value="ACP55694.1"/>
    <property type="molecule type" value="Genomic_DNA"/>
</dbReference>
<dbReference type="RefSeq" id="WP_012711683.1">
    <property type="nucleotide sequence ID" value="NC_012632.1"/>
</dbReference>
<dbReference type="SMR" id="C3MZ62"/>
<dbReference type="GeneID" id="84062057"/>
<dbReference type="KEGG" id="sim:M1627_1819"/>
<dbReference type="HOGENOM" id="CLU_089358_3_1_2"/>
<dbReference type="UniPathway" id="UPA00275">
    <property type="reaction ID" value="UER00404"/>
</dbReference>
<dbReference type="Proteomes" id="UP000002307">
    <property type="component" value="Chromosome"/>
</dbReference>
<dbReference type="GO" id="GO:0009349">
    <property type="term" value="C:riboflavin synthase complex"/>
    <property type="evidence" value="ECO:0007669"/>
    <property type="project" value="InterPro"/>
</dbReference>
<dbReference type="GO" id="GO:0000906">
    <property type="term" value="F:6,7-dimethyl-8-ribityllumazine synthase activity"/>
    <property type="evidence" value="ECO:0007669"/>
    <property type="project" value="UniProtKB-UniRule"/>
</dbReference>
<dbReference type="GO" id="GO:0009231">
    <property type="term" value="P:riboflavin biosynthetic process"/>
    <property type="evidence" value="ECO:0007669"/>
    <property type="project" value="UniProtKB-UniRule"/>
</dbReference>
<dbReference type="CDD" id="cd09211">
    <property type="entry name" value="Lumazine_synthase_archaeal"/>
    <property type="match status" value="1"/>
</dbReference>
<dbReference type="FunFam" id="3.40.50.960:FF:000003">
    <property type="entry name" value="6,7-dimethyl-8-ribityllumazine synthase"/>
    <property type="match status" value="1"/>
</dbReference>
<dbReference type="Gene3D" id="3.40.50.960">
    <property type="entry name" value="Lumazine/riboflavin synthase"/>
    <property type="match status" value="1"/>
</dbReference>
<dbReference type="HAMAP" id="MF_00178">
    <property type="entry name" value="Lumazine_synth"/>
    <property type="match status" value="1"/>
</dbReference>
<dbReference type="InterPro" id="IPR034964">
    <property type="entry name" value="LS"/>
</dbReference>
<dbReference type="InterPro" id="IPR002180">
    <property type="entry name" value="LS/RS"/>
</dbReference>
<dbReference type="InterPro" id="IPR036467">
    <property type="entry name" value="LS/RS_sf"/>
</dbReference>
<dbReference type="NCBIfam" id="TIGR00114">
    <property type="entry name" value="lumazine-synth"/>
    <property type="match status" value="1"/>
</dbReference>
<dbReference type="PANTHER" id="PTHR21058:SF0">
    <property type="entry name" value="6,7-DIMETHYL-8-RIBITYLLUMAZINE SYNTHASE"/>
    <property type="match status" value="1"/>
</dbReference>
<dbReference type="PANTHER" id="PTHR21058">
    <property type="entry name" value="6,7-DIMETHYL-8-RIBITYLLUMAZINE SYNTHASE DMRL SYNTHASE LUMAZINE SYNTHASE"/>
    <property type="match status" value="1"/>
</dbReference>
<dbReference type="Pfam" id="PF00885">
    <property type="entry name" value="DMRL_synthase"/>
    <property type="match status" value="1"/>
</dbReference>
<dbReference type="SUPFAM" id="SSF52121">
    <property type="entry name" value="Lumazine synthase"/>
    <property type="match status" value="1"/>
</dbReference>
<name>RISB_SACI3</name>